<accession>Q0I2K0</accession>
<keyword id="KW-0012">Acyltransferase</keyword>
<keyword id="KW-0028">Amino-acid biosynthesis</keyword>
<keyword id="KW-0963">Cytoplasm</keyword>
<keyword id="KW-0220">Diaminopimelate biosynthesis</keyword>
<keyword id="KW-0457">Lysine biosynthesis</keyword>
<keyword id="KW-0677">Repeat</keyword>
<keyword id="KW-0808">Transferase</keyword>
<organism>
    <name type="scientific">Histophilus somni (strain 129Pt)</name>
    <name type="common">Haemophilus somnus</name>
    <dbReference type="NCBI Taxonomy" id="205914"/>
    <lineage>
        <taxon>Bacteria</taxon>
        <taxon>Pseudomonadati</taxon>
        <taxon>Pseudomonadota</taxon>
        <taxon>Gammaproteobacteria</taxon>
        <taxon>Pasteurellales</taxon>
        <taxon>Pasteurellaceae</taxon>
        <taxon>Histophilus</taxon>
    </lineage>
</organism>
<sequence length="275" mass="29640">MSNLQNIIECAFERVAEITPTNAEAELRAAVDEAIEGLDKGIYRVAEKNEQGEWIVNQWLKKAVLLSFRLNDNVVVDGAETKYYDKVPVKFADYDVERFKTEGFRAVPGAVVRKGSHISKGVVLMPSFVNIGAYVGEGTMVDTWATVGSCAQIGKNVHLSGGVGIGGVLEPLQANPTIIGDNCFIGARSEIVEGVIVEEGCVISMGVFIGQSTKIYDRETGEIFYGRVPAGSVVVSGSLPSKCGKYNLYCAVIVKKVDAKTLGKVGINELLRTIE</sequence>
<proteinExistence type="inferred from homology"/>
<reference key="1">
    <citation type="journal article" date="2007" name="J. Bacteriol.">
        <title>Complete genome sequence of Haemophilus somnus (Histophilus somni) strain 129Pt and comparison to Haemophilus ducreyi 35000HP and Haemophilus influenzae Rd.</title>
        <authorList>
            <person name="Challacombe J.F."/>
            <person name="Duncan A.J."/>
            <person name="Brettin T.S."/>
            <person name="Bruce D."/>
            <person name="Chertkov O."/>
            <person name="Detter J.C."/>
            <person name="Han C.S."/>
            <person name="Misra M."/>
            <person name="Richardson P."/>
            <person name="Tapia R."/>
            <person name="Thayer N."/>
            <person name="Xie G."/>
            <person name="Inzana T.J."/>
        </authorList>
    </citation>
    <scope>NUCLEOTIDE SEQUENCE [LARGE SCALE GENOMIC DNA]</scope>
    <source>
        <strain>129Pt</strain>
    </source>
</reference>
<dbReference type="EC" id="2.3.1.117" evidence="1"/>
<dbReference type="EMBL" id="CP000436">
    <property type="protein sequence ID" value="ABI25060.1"/>
    <property type="molecule type" value="Genomic_DNA"/>
</dbReference>
<dbReference type="SMR" id="Q0I2K0"/>
<dbReference type="KEGG" id="hso:HS_0785"/>
<dbReference type="eggNOG" id="COG2171">
    <property type="taxonomic scope" value="Bacteria"/>
</dbReference>
<dbReference type="HOGENOM" id="CLU_050859_0_1_6"/>
<dbReference type="UniPathway" id="UPA00034">
    <property type="reaction ID" value="UER00019"/>
</dbReference>
<dbReference type="GO" id="GO:0005737">
    <property type="term" value="C:cytoplasm"/>
    <property type="evidence" value="ECO:0007669"/>
    <property type="project" value="UniProtKB-SubCell"/>
</dbReference>
<dbReference type="GO" id="GO:0008666">
    <property type="term" value="F:2,3,4,5-tetrahydropyridine-2,6-dicarboxylate N-succinyltransferase activity"/>
    <property type="evidence" value="ECO:0007669"/>
    <property type="project" value="UniProtKB-UniRule"/>
</dbReference>
<dbReference type="GO" id="GO:0016779">
    <property type="term" value="F:nucleotidyltransferase activity"/>
    <property type="evidence" value="ECO:0007669"/>
    <property type="project" value="TreeGrafter"/>
</dbReference>
<dbReference type="GO" id="GO:0019877">
    <property type="term" value="P:diaminopimelate biosynthetic process"/>
    <property type="evidence" value="ECO:0007669"/>
    <property type="project" value="UniProtKB-UniRule"/>
</dbReference>
<dbReference type="GO" id="GO:0009089">
    <property type="term" value="P:lysine biosynthetic process via diaminopimelate"/>
    <property type="evidence" value="ECO:0007669"/>
    <property type="project" value="UniProtKB-UniRule"/>
</dbReference>
<dbReference type="CDD" id="cd03350">
    <property type="entry name" value="LbH_THP_succinylT"/>
    <property type="match status" value="1"/>
</dbReference>
<dbReference type="Gene3D" id="2.160.10.10">
    <property type="entry name" value="Hexapeptide repeat proteins"/>
    <property type="match status" value="1"/>
</dbReference>
<dbReference type="Gene3D" id="1.10.166.10">
    <property type="entry name" value="Tetrahydrodipicolinate-N-succinyltransferase, N-terminal domain"/>
    <property type="match status" value="1"/>
</dbReference>
<dbReference type="HAMAP" id="MF_00811">
    <property type="entry name" value="DapD"/>
    <property type="match status" value="1"/>
</dbReference>
<dbReference type="InterPro" id="IPR005664">
    <property type="entry name" value="DapD_Trfase_Hexpep_rpt_fam"/>
</dbReference>
<dbReference type="InterPro" id="IPR001451">
    <property type="entry name" value="Hexapep"/>
</dbReference>
<dbReference type="InterPro" id="IPR018357">
    <property type="entry name" value="Hexapep_transf_CS"/>
</dbReference>
<dbReference type="InterPro" id="IPR023180">
    <property type="entry name" value="THP_succinylTrfase_dom1"/>
</dbReference>
<dbReference type="InterPro" id="IPR037133">
    <property type="entry name" value="THP_succinylTrfase_N_sf"/>
</dbReference>
<dbReference type="InterPro" id="IPR011004">
    <property type="entry name" value="Trimer_LpxA-like_sf"/>
</dbReference>
<dbReference type="NCBIfam" id="TIGR00965">
    <property type="entry name" value="dapD"/>
    <property type="match status" value="1"/>
</dbReference>
<dbReference type="NCBIfam" id="NF008808">
    <property type="entry name" value="PRK11830.1"/>
    <property type="match status" value="1"/>
</dbReference>
<dbReference type="PANTHER" id="PTHR19136:SF52">
    <property type="entry name" value="2,3,4,5-TETRAHYDROPYRIDINE-2,6-DICARBOXYLATE N-SUCCINYLTRANSFERASE"/>
    <property type="match status" value="1"/>
</dbReference>
<dbReference type="PANTHER" id="PTHR19136">
    <property type="entry name" value="MOLYBDENUM COFACTOR GUANYLYLTRANSFERASE"/>
    <property type="match status" value="1"/>
</dbReference>
<dbReference type="Pfam" id="PF14602">
    <property type="entry name" value="Hexapep_2"/>
    <property type="match status" value="1"/>
</dbReference>
<dbReference type="Pfam" id="PF14805">
    <property type="entry name" value="THDPS_N_2"/>
    <property type="match status" value="1"/>
</dbReference>
<dbReference type="SUPFAM" id="SSF51161">
    <property type="entry name" value="Trimeric LpxA-like enzymes"/>
    <property type="match status" value="1"/>
</dbReference>
<dbReference type="PROSITE" id="PS00101">
    <property type="entry name" value="HEXAPEP_TRANSFERASES"/>
    <property type="match status" value="1"/>
</dbReference>
<comment type="catalytic activity">
    <reaction evidence="1">
        <text>(S)-2,3,4,5-tetrahydrodipicolinate + succinyl-CoA + H2O = (S)-2-succinylamino-6-oxoheptanedioate + CoA</text>
        <dbReference type="Rhea" id="RHEA:17325"/>
        <dbReference type="ChEBI" id="CHEBI:15377"/>
        <dbReference type="ChEBI" id="CHEBI:15685"/>
        <dbReference type="ChEBI" id="CHEBI:16845"/>
        <dbReference type="ChEBI" id="CHEBI:57287"/>
        <dbReference type="ChEBI" id="CHEBI:57292"/>
        <dbReference type="EC" id="2.3.1.117"/>
    </reaction>
</comment>
<comment type="pathway">
    <text evidence="1">Amino-acid biosynthesis; L-lysine biosynthesis via DAP pathway; LL-2,6-diaminopimelate from (S)-tetrahydrodipicolinate (succinylase route): step 1/3.</text>
</comment>
<comment type="subunit">
    <text evidence="1">Homotrimer.</text>
</comment>
<comment type="subcellular location">
    <subcellularLocation>
        <location evidence="1">Cytoplasm</location>
    </subcellularLocation>
</comment>
<comment type="similarity">
    <text evidence="1">Belongs to the transferase hexapeptide repeat family.</text>
</comment>
<feature type="chain" id="PRO_1000047143" description="2,3,4,5-tetrahydropyridine-2,6-dicarboxylate N-succinyltransferase">
    <location>
        <begin position="1"/>
        <end position="275"/>
    </location>
</feature>
<feature type="binding site" evidence="1">
    <location>
        <position position="105"/>
    </location>
    <ligand>
        <name>substrate</name>
    </ligand>
</feature>
<feature type="binding site" evidence="1">
    <location>
        <position position="142"/>
    </location>
    <ligand>
        <name>substrate</name>
    </ligand>
</feature>
<evidence type="ECO:0000255" key="1">
    <source>
        <dbReference type="HAMAP-Rule" id="MF_00811"/>
    </source>
</evidence>
<protein>
    <recommendedName>
        <fullName evidence="1">2,3,4,5-tetrahydropyridine-2,6-dicarboxylate N-succinyltransferase</fullName>
        <ecNumber evidence="1">2.3.1.117</ecNumber>
    </recommendedName>
    <alternativeName>
        <fullName evidence="1">Tetrahydrodipicolinate N-succinyltransferase</fullName>
        <shortName evidence="1">THDP succinyltransferase</shortName>
        <shortName evidence="1">THP succinyltransferase</shortName>
        <shortName evidence="1">Tetrahydropicolinate succinylase</shortName>
    </alternativeName>
</protein>
<gene>
    <name evidence="1" type="primary">dapD</name>
    <name type="ordered locus">HS_0785</name>
</gene>
<name>DAPD_HISS1</name>